<comment type="function">
    <text evidence="2">Sugar transporter. Transports monosaccharides across the vacuolar membrane independently from a proton gradient. May function coordinately with the vacuolar invertase to regulate osmotic pressure by affecting the accumulation of sugar in the cells under abiotic stress conditions.</text>
</comment>
<comment type="subcellular location">
    <subcellularLocation>
        <location evidence="2">Vacuole membrane</location>
        <topology evidence="1">Multi-pass membrane protein</topology>
    </subcellularLocation>
    <subcellularLocation>
        <location evidence="2">Vesicle</location>
    </subcellularLocation>
</comment>
<comment type="alternative products">
    <event type="alternative splicing"/>
    <isoform>
        <id>Q94KE0-1</id>
        <name>1</name>
        <sequence type="displayed"/>
    </isoform>
    <isoform>
        <id>Q94KE0-2</id>
        <name>2</name>
        <sequence type="described" ref="VSP_021545"/>
    </isoform>
</comment>
<comment type="tissue specificity">
    <text evidence="2">Expressed in both shoots and roots. In roots, strongly expressed in pericycle and xylem parenchyma cells, and to a lesser extent in the root endodermis. In flowers, expressed in sepals.</text>
</comment>
<comment type="induction">
    <text evidence="2">By drought and high salinity conditions, and with exogenous application of abscisic acid (ABA), with high expression after 5 hour exposure to these conditions. Expression in roots is higher than that in leaves upon the high salinity and ABA treatment likewise as it is under normal conditions.</text>
</comment>
<comment type="domain">
    <text evidence="2">The N-terminal sequence motif LXXXLL is necessary for localization to the vacuole membrane (tonoplast).</text>
</comment>
<comment type="disruption phenotype">
    <text evidence="2">No effect on the root lengths compared to those of wild-type plant under high salinity conditions.</text>
</comment>
<comment type="miscellaneous">
    <molecule>Isoform 2</molecule>
    <text evidence="5">May be due to a competing acceptor splice site.</text>
</comment>
<comment type="similarity">
    <text evidence="5">Belongs to the major facilitator superfamily. Sugar transporter (TC 2.A.1.1) family.</text>
</comment>
<comment type="sequence caution" evidence="5">
    <conflict type="erroneous gene model prediction">
        <sequence resource="EMBL-CDS" id="AAB70413"/>
    </conflict>
</comment>
<sequence length="470" mass="51299">MTMSENSRNLEAGLLLRKNQNDINECRITAVVLFSTFVSVCGSFCFGCAAGYSSVAQTGIINDLGLSVAQYSMFGSIMTFGGMIGAIFSGKVADLMGRKGTMWFAQIFCIFGWVAVALAKDSMWLDIGRLSTGFAVGLLSYVIPVYIAEITPKHVRGAFVFANQLMQSCGLSLFYVIGNFVHWRNLALIGLIPCALQVVTLFFIPESPRLLGKWGHEKECRASLQSLRGDDADISEEANTIKETMILFDEGPKSRVMDLFQRRYAPSVVIGVGLMLLQQLSGSSGLMYYVGSVFDKGGFPSSIGSMILAVIMIPKALLGLILVEKMGRRPLLLASTGGMCFFSLLLSFSFCFRSYGMLDELTPIFTCIGVVGFISSFAVGMGGLPWIIMSEIFPMNVKVSAGTLVTLANWSFGWIVAFAYNFMLEWNASGTFLIFFTICGAGIVFIYAMVPETKGRTLEDIQASLTDFLQ</sequence>
<keyword id="KW-0025">Alternative splicing</keyword>
<keyword id="KW-0472">Membrane</keyword>
<keyword id="KW-1185">Reference proteome</keyword>
<keyword id="KW-0346">Stress response</keyword>
<keyword id="KW-0762">Sugar transport</keyword>
<keyword id="KW-0812">Transmembrane</keyword>
<keyword id="KW-1133">Transmembrane helix</keyword>
<keyword id="KW-0813">Transport</keyword>
<keyword id="KW-0926">Vacuole</keyword>
<reference key="1">
    <citation type="submission" date="1999-10" db="EMBL/GenBank/DDBJ databases">
        <title>A novel multigene family in Arabidopsis thaliana coding for putative sugar transporters.</title>
        <authorList>
            <person name="Gy I."/>
            <person name="Kreis M."/>
            <person name="Lecharny A."/>
        </authorList>
    </citation>
    <scope>NUCLEOTIDE SEQUENCE [MRNA] (ISOFORM 2)</scope>
</reference>
<reference key="2">
    <citation type="submission" date="2008-03" db="EMBL/GenBank/DDBJ databases">
        <title>An Arabidopsis hexose transporter-like protein.</title>
        <authorList>
            <person name="Sauer N."/>
            <person name="Wirsching P."/>
        </authorList>
    </citation>
    <scope>NUCLEOTIDE SEQUENCE [MRNA] (ISOFORM 1)</scope>
    <source>
        <strain>cv. Columbia</strain>
    </source>
</reference>
<reference key="3">
    <citation type="journal article" date="2000" name="Nature">
        <title>Sequence and analysis of chromosome 1 of the plant Arabidopsis thaliana.</title>
        <authorList>
            <person name="Theologis A."/>
            <person name="Ecker J.R."/>
            <person name="Palm C.J."/>
            <person name="Federspiel N.A."/>
            <person name="Kaul S."/>
            <person name="White O."/>
            <person name="Alonso J."/>
            <person name="Altafi H."/>
            <person name="Araujo R."/>
            <person name="Bowman C.L."/>
            <person name="Brooks S.Y."/>
            <person name="Buehler E."/>
            <person name="Chan A."/>
            <person name="Chao Q."/>
            <person name="Chen H."/>
            <person name="Cheuk R.F."/>
            <person name="Chin C.W."/>
            <person name="Chung M.K."/>
            <person name="Conn L."/>
            <person name="Conway A.B."/>
            <person name="Conway A.R."/>
            <person name="Creasy T.H."/>
            <person name="Dewar K."/>
            <person name="Dunn P."/>
            <person name="Etgu P."/>
            <person name="Feldblyum T.V."/>
            <person name="Feng J.-D."/>
            <person name="Fong B."/>
            <person name="Fujii C.Y."/>
            <person name="Gill J.E."/>
            <person name="Goldsmith A.D."/>
            <person name="Haas B."/>
            <person name="Hansen N.F."/>
            <person name="Hughes B."/>
            <person name="Huizar L."/>
            <person name="Hunter J.L."/>
            <person name="Jenkins J."/>
            <person name="Johnson-Hopson C."/>
            <person name="Khan S."/>
            <person name="Khaykin E."/>
            <person name="Kim C.J."/>
            <person name="Koo H.L."/>
            <person name="Kremenetskaia I."/>
            <person name="Kurtz D.B."/>
            <person name="Kwan A."/>
            <person name="Lam B."/>
            <person name="Langin-Hooper S."/>
            <person name="Lee A."/>
            <person name="Lee J.M."/>
            <person name="Lenz C.A."/>
            <person name="Li J.H."/>
            <person name="Li Y.-P."/>
            <person name="Lin X."/>
            <person name="Liu S.X."/>
            <person name="Liu Z.A."/>
            <person name="Luros J.S."/>
            <person name="Maiti R."/>
            <person name="Marziali A."/>
            <person name="Militscher J."/>
            <person name="Miranda M."/>
            <person name="Nguyen M."/>
            <person name="Nierman W.C."/>
            <person name="Osborne B.I."/>
            <person name="Pai G."/>
            <person name="Peterson J."/>
            <person name="Pham P.K."/>
            <person name="Rizzo M."/>
            <person name="Rooney T."/>
            <person name="Rowley D."/>
            <person name="Sakano H."/>
            <person name="Salzberg S.L."/>
            <person name="Schwartz J.R."/>
            <person name="Shinn P."/>
            <person name="Southwick A.M."/>
            <person name="Sun H."/>
            <person name="Tallon L.J."/>
            <person name="Tambunga G."/>
            <person name="Toriumi M.J."/>
            <person name="Town C.D."/>
            <person name="Utterback T."/>
            <person name="Van Aken S."/>
            <person name="Vaysberg M."/>
            <person name="Vysotskaia V.S."/>
            <person name="Walker M."/>
            <person name="Wu D."/>
            <person name="Yu G."/>
            <person name="Fraser C.M."/>
            <person name="Venter J.C."/>
            <person name="Davis R.W."/>
        </authorList>
    </citation>
    <scope>NUCLEOTIDE SEQUENCE [LARGE SCALE GENOMIC DNA]</scope>
    <source>
        <strain>cv. Columbia</strain>
    </source>
</reference>
<reference key="4">
    <citation type="journal article" date="2017" name="Plant J.">
        <title>Araport11: a complete reannotation of the Arabidopsis thaliana reference genome.</title>
        <authorList>
            <person name="Cheng C.Y."/>
            <person name="Krishnakumar V."/>
            <person name="Chan A.P."/>
            <person name="Thibaud-Nissen F."/>
            <person name="Schobel S."/>
            <person name="Town C.D."/>
        </authorList>
    </citation>
    <scope>GENOME REANNOTATION</scope>
    <source>
        <strain>cv. Columbia</strain>
    </source>
</reference>
<reference key="5">
    <citation type="journal article" date="2003" name="Science">
        <title>Empirical analysis of transcriptional activity in the Arabidopsis genome.</title>
        <authorList>
            <person name="Yamada K."/>
            <person name="Lim J."/>
            <person name="Dale J.M."/>
            <person name="Chen H."/>
            <person name="Shinn P."/>
            <person name="Palm C.J."/>
            <person name="Southwick A.M."/>
            <person name="Wu H.C."/>
            <person name="Kim C.J."/>
            <person name="Nguyen M."/>
            <person name="Pham P.K."/>
            <person name="Cheuk R.F."/>
            <person name="Karlin-Newmann G."/>
            <person name="Liu S.X."/>
            <person name="Lam B."/>
            <person name="Sakano H."/>
            <person name="Wu T."/>
            <person name="Yu G."/>
            <person name="Miranda M."/>
            <person name="Quach H.L."/>
            <person name="Tripp M."/>
            <person name="Chang C.H."/>
            <person name="Lee J.M."/>
            <person name="Toriumi M.J."/>
            <person name="Chan M.M."/>
            <person name="Tang C.C."/>
            <person name="Onodera C.S."/>
            <person name="Deng J.M."/>
            <person name="Akiyama K."/>
            <person name="Ansari Y."/>
            <person name="Arakawa T."/>
            <person name="Banh J."/>
            <person name="Banno F."/>
            <person name="Bowser L."/>
            <person name="Brooks S.Y."/>
            <person name="Carninci P."/>
            <person name="Chao Q."/>
            <person name="Choy N."/>
            <person name="Enju A."/>
            <person name="Goldsmith A.D."/>
            <person name="Gurjal M."/>
            <person name="Hansen N.F."/>
            <person name="Hayashizaki Y."/>
            <person name="Johnson-Hopson C."/>
            <person name="Hsuan V.W."/>
            <person name="Iida K."/>
            <person name="Karnes M."/>
            <person name="Khan S."/>
            <person name="Koesema E."/>
            <person name="Ishida J."/>
            <person name="Jiang P.X."/>
            <person name="Jones T."/>
            <person name="Kawai J."/>
            <person name="Kamiya A."/>
            <person name="Meyers C."/>
            <person name="Nakajima M."/>
            <person name="Narusaka M."/>
            <person name="Seki M."/>
            <person name="Sakurai T."/>
            <person name="Satou M."/>
            <person name="Tamse R."/>
            <person name="Vaysberg M."/>
            <person name="Wallender E.K."/>
            <person name="Wong C."/>
            <person name="Yamamura Y."/>
            <person name="Yuan S."/>
            <person name="Shinozaki K."/>
            <person name="Davis R.W."/>
            <person name="Theologis A."/>
            <person name="Ecker J.R."/>
        </authorList>
    </citation>
    <scope>NUCLEOTIDE SEQUENCE [LARGE SCALE MRNA] (ISOFORM 1)</scope>
    <source>
        <strain>cv. Columbia</strain>
    </source>
</reference>
<reference key="6">
    <citation type="journal article" date="2006" name="BMC Evol. Biol.">
        <title>The monosaccharide transporter gene family in land plants is ancient and shows differential subfamily expression and expansion across lineages.</title>
        <authorList>
            <person name="Johnson D.A."/>
            <person name="Hill J.P."/>
            <person name="Thomas M.A."/>
        </authorList>
    </citation>
    <scope>GENE FAMILY</scope>
</reference>
<reference key="7">
    <citation type="journal article" date="2010" name="J. Biol. Chem.">
        <title>Functional analysis of an Arabidopsis thaliana abiotic stress-inducible facilitated diffusion transporter for monosaccharides.</title>
        <authorList>
            <person name="Yamada K."/>
            <person name="Osakabe Y."/>
            <person name="Mizoi J."/>
            <person name="Nakashima K."/>
            <person name="Fujita Y."/>
            <person name="Shinozaki K."/>
            <person name="Yamaguchi-Shinozaki K."/>
        </authorList>
    </citation>
    <scope>FUNCTION</scope>
    <scope>SUBCELLULAR LOCATION</scope>
    <scope>TISSUE SPECIFICITY</scope>
    <scope>INDUCTION</scope>
    <scope>DOMAIN</scope>
    <scope>DISRUPTION PHENOTYPE</scope>
    <scope>MOTIF</scope>
    <scope>MUTAGENESIS OF LEU-10; LEU-14; LEU-15 AND LEU-16</scope>
</reference>
<organism>
    <name type="scientific">Arabidopsis thaliana</name>
    <name type="common">Mouse-ear cress</name>
    <dbReference type="NCBI Taxonomy" id="3702"/>
    <lineage>
        <taxon>Eukaryota</taxon>
        <taxon>Viridiplantae</taxon>
        <taxon>Streptophyta</taxon>
        <taxon>Embryophyta</taxon>
        <taxon>Tracheophyta</taxon>
        <taxon>Spermatophyta</taxon>
        <taxon>Magnoliopsida</taxon>
        <taxon>eudicotyledons</taxon>
        <taxon>Gunneridae</taxon>
        <taxon>Pentapetalae</taxon>
        <taxon>rosids</taxon>
        <taxon>malvids</taxon>
        <taxon>Brassicales</taxon>
        <taxon>Brassicaceae</taxon>
        <taxon>Camelineae</taxon>
        <taxon>Arabidopsis</taxon>
    </lineage>
</organism>
<dbReference type="EMBL" id="AJ249968">
    <property type="protein sequence ID" value="CAB64733.1"/>
    <property type="molecule type" value="mRNA"/>
</dbReference>
<dbReference type="EMBL" id="AM944529">
    <property type="protein sequence ID" value="CAQ16329.1"/>
    <property type="molecule type" value="mRNA"/>
</dbReference>
<dbReference type="EMBL" id="AC000106">
    <property type="protein sequence ID" value="AAB70413.1"/>
    <property type="status" value="ALT_SEQ"/>
    <property type="molecule type" value="Genomic_DNA"/>
</dbReference>
<dbReference type="EMBL" id="CP002684">
    <property type="protein sequence ID" value="AEE28367.1"/>
    <property type="molecule type" value="Genomic_DNA"/>
</dbReference>
<dbReference type="EMBL" id="CP002684">
    <property type="protein sequence ID" value="AEE28368.1"/>
    <property type="molecule type" value="Genomic_DNA"/>
</dbReference>
<dbReference type="EMBL" id="AF367260">
    <property type="protein sequence ID" value="AAK56249.1"/>
    <property type="molecule type" value="mRNA"/>
</dbReference>
<dbReference type="EMBL" id="AY133547">
    <property type="protein sequence ID" value="AAM91377.1"/>
    <property type="molecule type" value="mRNA"/>
</dbReference>
<dbReference type="PIR" id="A86221">
    <property type="entry name" value="A86221"/>
</dbReference>
<dbReference type="RefSeq" id="NP_563829.1">
    <molecule id="Q94KE0-1"/>
    <property type="nucleotide sequence ID" value="NM_100764.4"/>
</dbReference>
<dbReference type="RefSeq" id="NP_849618.1">
    <molecule id="Q94KE0-2"/>
    <property type="nucleotide sequence ID" value="NM_179287.2"/>
</dbReference>
<dbReference type="SMR" id="Q94KE0"/>
<dbReference type="BioGRID" id="22654">
    <property type="interactions" value="14"/>
</dbReference>
<dbReference type="FunCoup" id="Q94KE0">
    <property type="interactions" value="931"/>
</dbReference>
<dbReference type="IntAct" id="Q94KE0">
    <property type="interactions" value="11"/>
</dbReference>
<dbReference type="STRING" id="3702.Q94KE0"/>
<dbReference type="PaxDb" id="3702-AT1G08920.2"/>
<dbReference type="ProteomicsDB" id="222289">
    <molecule id="Q94KE0-1"/>
</dbReference>
<dbReference type="EnsemblPlants" id="AT1G08920.1">
    <molecule id="Q94KE0-1"/>
    <property type="protein sequence ID" value="AT1G08920.1"/>
    <property type="gene ID" value="AT1G08920"/>
</dbReference>
<dbReference type="EnsemblPlants" id="AT1G08920.2">
    <molecule id="Q94KE0-2"/>
    <property type="protein sequence ID" value="AT1G08920.2"/>
    <property type="gene ID" value="AT1G08920"/>
</dbReference>
<dbReference type="GeneID" id="837413"/>
<dbReference type="Gramene" id="AT1G08920.1">
    <molecule id="Q94KE0-1"/>
    <property type="protein sequence ID" value="AT1G08920.1"/>
    <property type="gene ID" value="AT1G08920"/>
</dbReference>
<dbReference type="Gramene" id="AT1G08920.2">
    <molecule id="Q94KE0-2"/>
    <property type="protein sequence ID" value="AT1G08920.2"/>
    <property type="gene ID" value="AT1G08920"/>
</dbReference>
<dbReference type="KEGG" id="ath:AT1G08920"/>
<dbReference type="Araport" id="AT1G08920"/>
<dbReference type="TAIR" id="AT1G08920">
    <property type="gene designation" value="ESL1"/>
</dbReference>
<dbReference type="eggNOG" id="KOG0254">
    <property type="taxonomic scope" value="Eukaryota"/>
</dbReference>
<dbReference type="HOGENOM" id="CLU_001265_30_5_1"/>
<dbReference type="InParanoid" id="Q94KE0"/>
<dbReference type="OMA" id="GNAMGPY"/>
<dbReference type="OrthoDB" id="6612291at2759"/>
<dbReference type="PhylomeDB" id="Q94KE0"/>
<dbReference type="PRO" id="PR:Q94KE0"/>
<dbReference type="Proteomes" id="UP000006548">
    <property type="component" value="Chromosome 1"/>
</dbReference>
<dbReference type="ExpressionAtlas" id="Q94KE0">
    <property type="expression patterns" value="baseline and differential"/>
</dbReference>
<dbReference type="GO" id="GO:0009705">
    <property type="term" value="C:plant-type vacuole membrane"/>
    <property type="evidence" value="ECO:0000314"/>
    <property type="project" value="TAIR"/>
</dbReference>
<dbReference type="GO" id="GO:0031982">
    <property type="term" value="C:vesicle"/>
    <property type="evidence" value="ECO:0007669"/>
    <property type="project" value="UniProtKB-SubCell"/>
</dbReference>
<dbReference type="GO" id="GO:0015145">
    <property type="term" value="F:monosaccharide transmembrane transporter activity"/>
    <property type="evidence" value="ECO:0000314"/>
    <property type="project" value="TAIR"/>
</dbReference>
<dbReference type="GO" id="GO:0015749">
    <property type="term" value="P:monosaccharide transmembrane transport"/>
    <property type="evidence" value="ECO:0000314"/>
    <property type="project" value="TAIR"/>
</dbReference>
<dbReference type="GO" id="GO:0009737">
    <property type="term" value="P:response to abscisic acid"/>
    <property type="evidence" value="ECO:0000270"/>
    <property type="project" value="TAIR"/>
</dbReference>
<dbReference type="GO" id="GO:0009651">
    <property type="term" value="P:response to salt stress"/>
    <property type="evidence" value="ECO:0000270"/>
    <property type="project" value="TAIR"/>
</dbReference>
<dbReference type="GO" id="GO:0009414">
    <property type="term" value="P:response to water deprivation"/>
    <property type="evidence" value="ECO:0000270"/>
    <property type="project" value="TAIR"/>
</dbReference>
<dbReference type="CDD" id="cd17358">
    <property type="entry name" value="MFS_GLUT6_8_Class3_like"/>
    <property type="match status" value="1"/>
</dbReference>
<dbReference type="FunFam" id="1.20.1250.20:FF:000043">
    <property type="entry name" value="sugar transporter ERD6-like 6"/>
    <property type="match status" value="1"/>
</dbReference>
<dbReference type="Gene3D" id="1.20.1250.20">
    <property type="entry name" value="MFS general substrate transporter like domains"/>
    <property type="match status" value="1"/>
</dbReference>
<dbReference type="InterPro" id="IPR020846">
    <property type="entry name" value="MFS_dom"/>
</dbReference>
<dbReference type="InterPro" id="IPR044775">
    <property type="entry name" value="MFS_ERD6/Tret1-like"/>
</dbReference>
<dbReference type="InterPro" id="IPR005828">
    <property type="entry name" value="MFS_sugar_transport-like"/>
</dbReference>
<dbReference type="InterPro" id="IPR036259">
    <property type="entry name" value="MFS_trans_sf"/>
</dbReference>
<dbReference type="InterPro" id="IPR050549">
    <property type="entry name" value="MFS_Trehalose_Transporter"/>
</dbReference>
<dbReference type="InterPro" id="IPR003663">
    <property type="entry name" value="Sugar/inositol_transpt"/>
</dbReference>
<dbReference type="InterPro" id="IPR005829">
    <property type="entry name" value="Sugar_transporter_CS"/>
</dbReference>
<dbReference type="NCBIfam" id="TIGR00879">
    <property type="entry name" value="SP"/>
    <property type="match status" value="1"/>
</dbReference>
<dbReference type="PANTHER" id="PTHR48021">
    <property type="match status" value="1"/>
</dbReference>
<dbReference type="PANTHER" id="PTHR48021:SF43">
    <property type="entry name" value="SUGAR TRANSPORTER ESL1"/>
    <property type="match status" value="1"/>
</dbReference>
<dbReference type="Pfam" id="PF00083">
    <property type="entry name" value="Sugar_tr"/>
    <property type="match status" value="1"/>
</dbReference>
<dbReference type="PRINTS" id="PR00171">
    <property type="entry name" value="SUGRTRNSPORT"/>
</dbReference>
<dbReference type="SUPFAM" id="SSF103473">
    <property type="entry name" value="MFS general substrate transporter"/>
    <property type="match status" value="1"/>
</dbReference>
<dbReference type="PROSITE" id="PS50850">
    <property type="entry name" value="MFS"/>
    <property type="match status" value="1"/>
</dbReference>
<dbReference type="PROSITE" id="PS00216">
    <property type="entry name" value="SUGAR_TRANSPORT_1"/>
    <property type="match status" value="2"/>
</dbReference>
<evidence type="ECO:0000255" key="1"/>
<evidence type="ECO:0000269" key="2">
    <source>
    </source>
</evidence>
<evidence type="ECO:0000303" key="3">
    <source>
    </source>
</evidence>
<evidence type="ECO:0000303" key="4">
    <source ref="1"/>
</evidence>
<evidence type="ECO:0000305" key="5"/>
<evidence type="ECO:0000312" key="6">
    <source>
        <dbReference type="Araport" id="AT1G08920"/>
    </source>
</evidence>
<evidence type="ECO:0000312" key="7">
    <source>
        <dbReference type="EMBL" id="AAB70413.1"/>
    </source>
</evidence>
<protein>
    <recommendedName>
        <fullName evidence="3">Sugar transporter ESL1</fullName>
    </recommendedName>
    <alternativeName>
        <fullName evidence="3">Protein EARLY-RESPONSIVE TO DEHYDRATION 6-LIKE 1</fullName>
        <shortName evidence="3">ERD six-like 1</shortName>
    </alternativeName>
    <alternativeName>
        <fullName>Sugar transporter ERD6-like 3</fullName>
    </alternativeName>
    <alternativeName>
        <fullName evidence="4">Sugar transporter-like protein 2</fullName>
    </alternativeName>
</protein>
<name>ESL1_ARATH</name>
<feature type="chain" id="PRO_0000259852" description="Sugar transporter ESL1">
    <location>
        <begin position="1"/>
        <end position="470"/>
    </location>
</feature>
<feature type="transmembrane region" description="Helical; Name=1" evidence="1">
    <location>
        <begin position="28"/>
        <end position="48"/>
    </location>
</feature>
<feature type="transmembrane region" description="Helical; Name=2" evidence="1">
    <location>
        <begin position="68"/>
        <end position="88"/>
    </location>
</feature>
<feature type="transmembrane region" description="Helical; Name=3" evidence="1">
    <location>
        <begin position="99"/>
        <end position="119"/>
    </location>
</feature>
<feature type="transmembrane region" description="Helical; Name=4" evidence="1">
    <location>
        <begin position="130"/>
        <end position="150"/>
    </location>
</feature>
<feature type="transmembrane region" description="Helical; Name=5" evidence="1">
    <location>
        <begin position="157"/>
        <end position="177"/>
    </location>
</feature>
<feature type="transmembrane region" description="Helical; Name=6" evidence="1">
    <location>
        <begin position="186"/>
        <end position="206"/>
    </location>
</feature>
<feature type="transmembrane region" description="Helical; Name=7" evidence="1">
    <location>
        <begin position="268"/>
        <end position="288"/>
    </location>
</feature>
<feature type="transmembrane region" description="Helical; Name=8" evidence="1">
    <location>
        <begin position="303"/>
        <end position="323"/>
    </location>
</feature>
<feature type="transmembrane region" description="Helical; Name=9" evidence="1">
    <location>
        <begin position="332"/>
        <end position="352"/>
    </location>
</feature>
<feature type="transmembrane region" description="Helical; Name=10" evidence="1">
    <location>
        <begin position="368"/>
        <end position="388"/>
    </location>
</feature>
<feature type="transmembrane region" description="Helical; Name=11" evidence="1">
    <location>
        <begin position="404"/>
        <end position="424"/>
    </location>
</feature>
<feature type="transmembrane region" description="Helical; Name=12" evidence="1">
    <location>
        <begin position="430"/>
        <end position="450"/>
    </location>
</feature>
<feature type="short sequence motif" description="Essential for the localization to the vacuole membrane" evidence="2">
    <location>
        <begin position="10"/>
        <end position="16"/>
    </location>
</feature>
<feature type="splice variant" id="VSP_021545" description="In isoform 2." evidence="4">
    <original>L</original>
    <variation>LMNDLYLQ</variation>
    <location>
        <position position="333"/>
    </location>
</feature>
<feature type="mutagenesis site" description="Localizes mainly to the endoplasmic reticulum." evidence="2">
    <original>L</original>
    <variation>A</variation>
    <location>
        <position position="10"/>
    </location>
</feature>
<feature type="mutagenesis site" description="Localizes to the plasma membrane. Loss of localization to the vacuole membrane; when associated with A-15 and A-16." evidence="2">
    <original>L</original>
    <variation>A</variation>
    <location>
        <position position="14"/>
    </location>
</feature>
<feature type="mutagenesis site" description="Localizes to the plasma membrane. Loss of localization to the vacuole membrane; when associated with A-14 and A-16." evidence="2">
    <original>L</original>
    <variation>A</variation>
    <location>
        <position position="15"/>
    </location>
</feature>
<feature type="mutagenesis site" description="Loss of localization to the vacuole membrane; when associated with A-14 and A-15." evidence="2">
    <original>L</original>
    <variation>A</variation>
    <location>
        <position position="16"/>
    </location>
</feature>
<feature type="sequence conflict" description="In Ref. 3; CAB64733." evidence="5" ref="3">
    <original>V</original>
    <variation>G</variation>
    <location>
        <position position="405"/>
    </location>
</feature>
<accession>Q94KE0</accession>
<accession>A0A178WFZ8</accession>
<accession>B1GXJ7</accession>
<accession>O04037</accession>
<accession>Q9SCW9</accession>
<proteinExistence type="evidence at protein level"/>
<gene>
    <name evidence="3" type="primary">ESL1</name>
    <name evidence="4" type="synonym">SUGTL2</name>
    <name evidence="6" type="ordered locus">At1g08920</name>
    <name evidence="7" type="ORF">F7G19.20</name>
</gene>